<name>Y553_STAES</name>
<feature type="chain" id="PRO_0000274158" description="Epimerase family protein SE_0553">
    <location>
        <begin position="1"/>
        <end position="299"/>
    </location>
</feature>
<accession>Q8CPY7</accession>
<comment type="similarity">
    <text evidence="1">Belongs to the NAD(P)-dependent epimerase/dehydratase family. SDR39U1 subfamily.</text>
</comment>
<proteinExistence type="inferred from homology"/>
<protein>
    <recommendedName>
        <fullName>Epimerase family protein SE_0553</fullName>
    </recommendedName>
</protein>
<gene>
    <name type="ordered locus">SE_0553</name>
</gene>
<evidence type="ECO:0000305" key="1"/>
<reference key="1">
    <citation type="journal article" date="2003" name="Mol. Microbiol.">
        <title>Genome-based analysis of virulence genes in a non-biofilm-forming Staphylococcus epidermidis strain (ATCC 12228).</title>
        <authorList>
            <person name="Zhang Y.-Q."/>
            <person name="Ren S.-X."/>
            <person name="Li H.-L."/>
            <person name="Wang Y.-X."/>
            <person name="Fu G."/>
            <person name="Yang J."/>
            <person name="Qin Z.-Q."/>
            <person name="Miao Y.-G."/>
            <person name="Wang W.-Y."/>
            <person name="Chen R.-S."/>
            <person name="Shen Y."/>
            <person name="Chen Z."/>
            <person name="Yuan Z.-H."/>
            <person name="Zhao G.-P."/>
            <person name="Qu D."/>
            <person name="Danchin A."/>
            <person name="Wen Y.-M."/>
        </authorList>
    </citation>
    <scope>NUCLEOTIDE SEQUENCE [LARGE SCALE GENOMIC DNA]</scope>
    <source>
        <strain>ATCC 12228 / FDA PCI 1200</strain>
    </source>
</reference>
<dbReference type="EMBL" id="AE015929">
    <property type="protein sequence ID" value="AAO04150.1"/>
    <property type="molecule type" value="Genomic_DNA"/>
</dbReference>
<dbReference type="RefSeq" id="NP_764108.1">
    <property type="nucleotide sequence ID" value="NC_004461.1"/>
</dbReference>
<dbReference type="RefSeq" id="WP_001829630.1">
    <property type="nucleotide sequence ID" value="NZ_WBME01000030.1"/>
</dbReference>
<dbReference type="SMR" id="Q8CPY7"/>
<dbReference type="KEGG" id="sep:SE_0553"/>
<dbReference type="PATRIC" id="fig|176280.10.peg.524"/>
<dbReference type="eggNOG" id="COG1090">
    <property type="taxonomic scope" value="Bacteria"/>
</dbReference>
<dbReference type="HOGENOM" id="CLU_047373_0_3_9"/>
<dbReference type="OrthoDB" id="9801773at2"/>
<dbReference type="Proteomes" id="UP000001411">
    <property type="component" value="Chromosome"/>
</dbReference>
<dbReference type="Gene3D" id="3.40.50.720">
    <property type="entry name" value="NAD(P)-binding Rossmann-like Domain"/>
    <property type="match status" value="1"/>
</dbReference>
<dbReference type="InterPro" id="IPR013549">
    <property type="entry name" value="DUF1731"/>
</dbReference>
<dbReference type="InterPro" id="IPR001509">
    <property type="entry name" value="Epimerase_deHydtase"/>
</dbReference>
<dbReference type="InterPro" id="IPR036291">
    <property type="entry name" value="NAD(P)-bd_dom_sf"/>
</dbReference>
<dbReference type="InterPro" id="IPR010099">
    <property type="entry name" value="SDR39U1"/>
</dbReference>
<dbReference type="NCBIfam" id="TIGR01777">
    <property type="entry name" value="yfcH"/>
    <property type="match status" value="1"/>
</dbReference>
<dbReference type="PANTHER" id="PTHR11092:SF0">
    <property type="entry name" value="EPIMERASE FAMILY PROTEIN SDR39U1"/>
    <property type="match status" value="1"/>
</dbReference>
<dbReference type="PANTHER" id="PTHR11092">
    <property type="entry name" value="SUGAR NUCLEOTIDE EPIMERASE RELATED"/>
    <property type="match status" value="1"/>
</dbReference>
<dbReference type="Pfam" id="PF08338">
    <property type="entry name" value="DUF1731"/>
    <property type="match status" value="1"/>
</dbReference>
<dbReference type="Pfam" id="PF01370">
    <property type="entry name" value="Epimerase"/>
    <property type="match status" value="1"/>
</dbReference>
<dbReference type="SUPFAM" id="SSF51735">
    <property type="entry name" value="NAD(P)-binding Rossmann-fold domains"/>
    <property type="match status" value="1"/>
</dbReference>
<sequence>MKRYLITGGTGMVGSHLVNEIKQTDAHITILTRQDKTSNHPKITYINWSKEGWQHQVPDIDIVINLAGATLNKRWTSSHKQAMMLSRIQSTQTLFELFETREHKPEVLFNASAMGYYPPDLFTSYTELYRTLPFDFLSEIVYQWERFANKFKQFGTRVVLGRFGLILSDDGGALEMMELPYRLYVGGKLGSGRQWYSWIHIDDLIRGILFTINHDNAEGPFNLTAPIPERQNLFGYTLARAMHKPHETWAPKLILRAVLGQMSTVILDTQKVLPNKLHALGFEFKYNNLRNALDDLIKA</sequence>
<organism>
    <name type="scientific">Staphylococcus epidermidis (strain ATCC 12228 / FDA PCI 1200)</name>
    <dbReference type="NCBI Taxonomy" id="176280"/>
    <lineage>
        <taxon>Bacteria</taxon>
        <taxon>Bacillati</taxon>
        <taxon>Bacillota</taxon>
        <taxon>Bacilli</taxon>
        <taxon>Bacillales</taxon>
        <taxon>Staphylococcaceae</taxon>
        <taxon>Staphylococcus</taxon>
    </lineage>
</organism>